<keyword id="KW-0479">Metal-binding</keyword>
<keyword id="KW-0687">Ribonucleoprotein</keyword>
<keyword id="KW-0689">Ribosomal protein</keyword>
<keyword id="KW-0862">Zinc</keyword>
<keyword id="KW-0863">Zinc-finger</keyword>
<accession>Q97BH4</accession>
<feature type="chain" id="PRO_0000137710" description="Small ribosomal subunit protein eS31">
    <location>
        <begin position="1"/>
        <end position="55"/>
    </location>
</feature>
<feature type="zinc finger region" description="C4-type" evidence="1">
    <location>
        <begin position="21"/>
        <end position="42"/>
    </location>
</feature>
<feature type="binding site" evidence="1">
    <location>
        <position position="21"/>
    </location>
    <ligand>
        <name>Zn(2+)</name>
        <dbReference type="ChEBI" id="CHEBI:29105"/>
    </ligand>
</feature>
<feature type="binding site" evidence="1">
    <location>
        <position position="24"/>
    </location>
    <ligand>
        <name>Zn(2+)</name>
        <dbReference type="ChEBI" id="CHEBI:29105"/>
    </ligand>
</feature>
<feature type="binding site" evidence="1">
    <location>
        <position position="39"/>
    </location>
    <ligand>
        <name>Zn(2+)</name>
        <dbReference type="ChEBI" id="CHEBI:29105"/>
    </ligand>
</feature>
<feature type="binding site" evidence="1">
    <location>
        <position position="42"/>
    </location>
    <ligand>
        <name>Zn(2+)</name>
        <dbReference type="ChEBI" id="CHEBI:29105"/>
    </ligand>
</feature>
<gene>
    <name evidence="1" type="primary">rps27ae</name>
    <name type="ordered locus">TV0481</name>
    <name type="ORF">TVG0468494</name>
</gene>
<protein>
    <recommendedName>
        <fullName evidence="1">Small ribosomal subunit protein eS31</fullName>
    </recommendedName>
    <alternativeName>
        <fullName evidence="2">30S ribosomal protein S27ae</fullName>
    </alternativeName>
</protein>
<dbReference type="EMBL" id="BA000011">
    <property type="protein sequence ID" value="BAB59623.1"/>
    <property type="molecule type" value="Genomic_DNA"/>
</dbReference>
<dbReference type="RefSeq" id="WP_010916740.1">
    <property type="nucleotide sequence ID" value="NC_002689.2"/>
</dbReference>
<dbReference type="SMR" id="Q97BH4"/>
<dbReference type="STRING" id="273116.gene:9381263"/>
<dbReference type="PaxDb" id="273116-14324696"/>
<dbReference type="GeneID" id="1440998"/>
<dbReference type="KEGG" id="tvo:TVG0468494"/>
<dbReference type="eggNOG" id="arCOG04183">
    <property type="taxonomic scope" value="Archaea"/>
</dbReference>
<dbReference type="HOGENOM" id="CLU_179743_2_0_2"/>
<dbReference type="OrthoDB" id="25142at2157"/>
<dbReference type="PhylomeDB" id="Q97BH4"/>
<dbReference type="Proteomes" id="UP000001017">
    <property type="component" value="Chromosome"/>
</dbReference>
<dbReference type="GO" id="GO:1990904">
    <property type="term" value="C:ribonucleoprotein complex"/>
    <property type="evidence" value="ECO:0007669"/>
    <property type="project" value="UniProtKB-KW"/>
</dbReference>
<dbReference type="GO" id="GO:0005840">
    <property type="term" value="C:ribosome"/>
    <property type="evidence" value="ECO:0007669"/>
    <property type="project" value="UniProtKB-KW"/>
</dbReference>
<dbReference type="GO" id="GO:0003735">
    <property type="term" value="F:structural constituent of ribosome"/>
    <property type="evidence" value="ECO:0007669"/>
    <property type="project" value="InterPro"/>
</dbReference>
<dbReference type="GO" id="GO:0008270">
    <property type="term" value="F:zinc ion binding"/>
    <property type="evidence" value="ECO:0007669"/>
    <property type="project" value="UniProtKB-UniRule"/>
</dbReference>
<dbReference type="GO" id="GO:0006412">
    <property type="term" value="P:translation"/>
    <property type="evidence" value="ECO:0007669"/>
    <property type="project" value="UniProtKB-UniRule"/>
</dbReference>
<dbReference type="Gene3D" id="6.20.50.180">
    <property type="match status" value="1"/>
</dbReference>
<dbReference type="HAMAP" id="MF_00777">
    <property type="entry name" value="Ribosomal_eS31"/>
    <property type="match status" value="1"/>
</dbReference>
<dbReference type="InterPro" id="IPR002906">
    <property type="entry name" value="Ribosomal_eS31"/>
</dbReference>
<dbReference type="InterPro" id="IPR022845">
    <property type="entry name" value="Ribosomal_eS31_arc"/>
</dbReference>
<dbReference type="InterPro" id="IPR011332">
    <property type="entry name" value="Ribosomal_zn-bd"/>
</dbReference>
<dbReference type="NCBIfam" id="NF001669">
    <property type="entry name" value="PRK00432.1"/>
    <property type="match status" value="1"/>
</dbReference>
<dbReference type="Pfam" id="PF01599">
    <property type="entry name" value="Ribosomal_S27"/>
    <property type="match status" value="1"/>
</dbReference>
<dbReference type="SMART" id="SM01402">
    <property type="entry name" value="Ribosomal_S27"/>
    <property type="match status" value="1"/>
</dbReference>
<dbReference type="SUPFAM" id="SSF57829">
    <property type="entry name" value="Zn-binding ribosomal proteins"/>
    <property type="match status" value="1"/>
</dbReference>
<sequence length="55" mass="6392">MQKRELYEIADGKLVRKHRFCPRCGPGVFLAEHADRFTCGRCGYTEFKKVKKAKS</sequence>
<name>RS27A_THEVO</name>
<organism>
    <name type="scientific">Thermoplasma volcanium (strain ATCC 51530 / DSM 4299 / JCM 9571 / NBRC 15438 / GSS1)</name>
    <dbReference type="NCBI Taxonomy" id="273116"/>
    <lineage>
        <taxon>Archaea</taxon>
        <taxon>Methanobacteriati</taxon>
        <taxon>Thermoplasmatota</taxon>
        <taxon>Thermoplasmata</taxon>
        <taxon>Thermoplasmatales</taxon>
        <taxon>Thermoplasmataceae</taxon>
        <taxon>Thermoplasma</taxon>
    </lineage>
</organism>
<reference key="1">
    <citation type="journal article" date="2000" name="Proc. Natl. Acad. Sci. U.S.A.">
        <title>Archaeal adaptation to higher temperatures revealed by genomic sequence of Thermoplasma volcanium.</title>
        <authorList>
            <person name="Kawashima T."/>
            <person name="Amano N."/>
            <person name="Koike H."/>
            <person name="Makino S."/>
            <person name="Higuchi S."/>
            <person name="Kawashima-Ohya Y."/>
            <person name="Watanabe K."/>
            <person name="Yamazaki M."/>
            <person name="Kanehori K."/>
            <person name="Kawamoto T."/>
            <person name="Nunoshiba T."/>
            <person name="Yamamoto Y."/>
            <person name="Aramaki H."/>
            <person name="Makino K."/>
            <person name="Suzuki M."/>
        </authorList>
    </citation>
    <scope>NUCLEOTIDE SEQUENCE [LARGE SCALE GENOMIC DNA]</scope>
    <source>
        <strain>ATCC 51530 / DSM 4299 / JCM 9571 / NBRC 15438 / GSS1</strain>
    </source>
</reference>
<comment type="cofactor">
    <cofactor evidence="1">
        <name>Zn(2+)</name>
        <dbReference type="ChEBI" id="CHEBI:29105"/>
    </cofactor>
    <text evidence="1">Binds 1 zinc ion per subunit.</text>
</comment>
<comment type="subunit">
    <text evidence="1">Part of the 30S ribosomal subunit.</text>
</comment>
<comment type="similarity">
    <text evidence="1">Belongs to the eukaryotic ribosomal protein eS31 family.</text>
</comment>
<evidence type="ECO:0000255" key="1">
    <source>
        <dbReference type="HAMAP-Rule" id="MF_00777"/>
    </source>
</evidence>
<evidence type="ECO:0000305" key="2"/>
<proteinExistence type="inferred from homology"/>